<comment type="function">
    <text evidence="1 6 7 8">Hydrolyzes ribosome-free peptidyl-tRNAs (with 1 or more amino acids incorporated), which drop off the ribosome during protein synthesis, or as a result of ribosome stalling (PubMed:4866985, PubMed:4898482, PubMed:9303320).</text>
</comment>
<comment type="function">
    <text evidence="2 3 4 6 7 8">The hydrolysis rate of peptidyl-tRNAs depends on the peptide chain length, with peptidyl-tRNAs with up to 5 residues being a better substrate; Gly(4)-Phe-tRNA(Phe) is hydrolyzed faster than Gly(2)-Phe-tRNA(Phe) which is hydrolyzed faster than Gly-Phe-tRNA(Phe) (PubMed:4898482). Also acts on singly charged tRNAs including charged tRNA(Ile), tRNA(Leu), tRNA(Ser), tRNA(Thr) and tRNA(Val) (PubMed:4866985). Acts on charged tRNA(Lys) (PubMed:9303320). Unblocked charged tRNAs are very poor substrates, discrimination is mediated by Asn-11 which binds to the main-chain carbonyl of the penultimate residue (PubMed:21718701). Acts on charged tRNA(Ala) (PubMed:22923517). Involved in lambda inhibition of host protein synthesis (PubMed:1833189). Pth activity may, directly or indirectly, be the target for lambda bar RNA leading to rap cell death (PubMed:1833189).</text>
</comment>
<comment type="function">
    <text evidence="5">Catalyzes the release of premature peptidyl moieties from peptidyl-tRNA molecules trapped in stalled 50S ribosomal subunits, and thus maintains levels of free tRNAs and 50S ribosomes (PubMed:38183984). Releases Ala-tailed nascent peptides from stalled 50S ribosomal subunits; in the absence of Ala tails less peptide release occurs (PubMed:38183984). Addition of 3 Ala residues suffices to stimulate peptide release from stalled 50S ribosomal subunits, although better release occurs with 7 residues (PubMed:38183984). Poly-Ala and poly-Ser are the most efficient residue in promoting peptide release, other amino acid heptad tails are less efficient (PubMed:38183984).</text>
</comment>
<comment type="catalytic activity">
    <reaction evidence="1 2 4 6 7 8">
        <text>an N-acyl-L-alpha-aminoacyl-tRNA + H2O = an N-acyl-L-amino acid + a tRNA + H(+)</text>
        <dbReference type="Rhea" id="RHEA:54448"/>
        <dbReference type="Rhea" id="RHEA-COMP:10123"/>
        <dbReference type="Rhea" id="RHEA-COMP:13883"/>
        <dbReference type="ChEBI" id="CHEBI:15377"/>
        <dbReference type="ChEBI" id="CHEBI:15378"/>
        <dbReference type="ChEBI" id="CHEBI:59874"/>
        <dbReference type="ChEBI" id="CHEBI:78442"/>
        <dbReference type="ChEBI" id="CHEBI:138191"/>
        <dbReference type="EC" id="3.1.1.29"/>
    </reaction>
    <physiologicalReaction direction="left-to-right" evidence="2 4 6 7 8">
        <dbReference type="Rhea" id="RHEA:54449"/>
    </physiologicalReaction>
</comment>
<comment type="activity regulation">
    <text evidence="7">Peptidyl-tRNA hydrolase activity inhibited by EDTA.</text>
</comment>
<comment type="biophysicochemical properties">
    <kinetics>
        <KM evidence="6">0.5 nM for N-acyl-leucyl-tRNA(Leu)</KM>
        <KM evidence="7">1.7 uM for Ac-Leu-tRNA (Leu)</KM>
        <KM evidence="7">0.67 uM for Ala-Ala-Leu-tRNA (Leu)</KM>
        <KM evidence="8">6 uM for di-acyl-lysyl-tRNA(Lys)</KM>
        <text evidence="8">kcat is 3.6 sec(-1) for di-acyl-lysyl-tRNA(Lys).</text>
    </kinetics>
    <phDependence>
        <text evidence="6">Optimum pH is 8.5.</text>
    </phDependence>
</comment>
<comment type="subunit">
    <text evidence="1 4 8">Monomer.</text>
</comment>
<comment type="subcellular location">
    <subcellularLocation>
        <location evidence="1 13 14">Cytoplasm</location>
    </subcellularLocation>
</comment>
<comment type="domain">
    <text evidence="4">Recognizes the backbone phosphates and ribose of the tRNA acceptor stem and backbone phosphates and ribose of the tRNA T-Psi-C stem, allowing the enzyme to recognize tRNA in a sequence-independent manner.</text>
</comment>
<comment type="disruption phenotype">
    <text evidence="8">Essential, it cannot be disrupted in the absence of a wild-type gene.</text>
</comment>
<comment type="similarity">
    <text evidence="1">Belongs to the PTH family.</text>
</comment>
<dbReference type="EC" id="3.1.1.29" evidence="1 2 6"/>
<dbReference type="EMBL" id="X61941">
    <property type="protein sequence ID" value="CAA43945.1"/>
    <property type="molecule type" value="Genomic_DNA"/>
</dbReference>
<dbReference type="EMBL" id="U00096">
    <property type="protein sequence ID" value="AAC74288.1"/>
    <property type="molecule type" value="Genomic_DNA"/>
</dbReference>
<dbReference type="EMBL" id="AP009048">
    <property type="protein sequence ID" value="BAA36062.1"/>
    <property type="molecule type" value="Genomic_DNA"/>
</dbReference>
<dbReference type="PIR" id="S16753">
    <property type="entry name" value="S16753"/>
</dbReference>
<dbReference type="RefSeq" id="NP_415722.1">
    <property type="nucleotide sequence ID" value="NC_000913.3"/>
</dbReference>
<dbReference type="RefSeq" id="WP_000152933.1">
    <property type="nucleotide sequence ID" value="NZ_STEB01000023.1"/>
</dbReference>
<dbReference type="PDB" id="2PTH">
    <property type="method" value="X-ray"/>
    <property type="resolution" value="1.20 A"/>
    <property type="chains" value="A=2-194"/>
</dbReference>
<dbReference type="PDB" id="3VJR">
    <property type="method" value="X-ray"/>
    <property type="resolution" value="2.40 A"/>
    <property type="chains" value="A/C=1-194"/>
</dbReference>
<dbReference type="PDBsum" id="2PTH"/>
<dbReference type="PDBsum" id="3VJR"/>
<dbReference type="SMR" id="P0A7D1"/>
<dbReference type="BioGRID" id="4262870">
    <property type="interactions" value="55"/>
</dbReference>
<dbReference type="DIP" id="DIP-35932N"/>
<dbReference type="FunCoup" id="P0A7D1">
    <property type="interactions" value="512"/>
</dbReference>
<dbReference type="IntAct" id="P0A7D1">
    <property type="interactions" value="16"/>
</dbReference>
<dbReference type="STRING" id="511145.b1204"/>
<dbReference type="jPOST" id="P0A7D1"/>
<dbReference type="PaxDb" id="511145-b1204"/>
<dbReference type="EnsemblBacteria" id="AAC74288">
    <property type="protein sequence ID" value="AAC74288"/>
    <property type="gene ID" value="b1204"/>
</dbReference>
<dbReference type="GeneID" id="93775269"/>
<dbReference type="GeneID" id="945765"/>
<dbReference type="KEGG" id="ecj:JW1195"/>
<dbReference type="KEGG" id="eco:b1204"/>
<dbReference type="KEGG" id="ecoc:C3026_07080"/>
<dbReference type="PATRIC" id="fig|1411691.4.peg.1080"/>
<dbReference type="EchoBASE" id="EB0778"/>
<dbReference type="eggNOG" id="COG0193">
    <property type="taxonomic scope" value="Bacteria"/>
</dbReference>
<dbReference type="HOGENOM" id="CLU_062456_3_1_6"/>
<dbReference type="InParanoid" id="P0A7D1"/>
<dbReference type="OMA" id="PNTYMNL"/>
<dbReference type="OrthoDB" id="9800507at2"/>
<dbReference type="PhylomeDB" id="P0A7D1"/>
<dbReference type="BioCyc" id="EcoCyc:EG10785-MONOMER"/>
<dbReference type="BioCyc" id="MetaCyc:EG10785-MONOMER"/>
<dbReference type="BRENDA" id="3.1.1.29">
    <property type="organism ID" value="2026"/>
</dbReference>
<dbReference type="SABIO-RK" id="P0A7D1"/>
<dbReference type="EvolutionaryTrace" id="P0A7D1"/>
<dbReference type="PRO" id="PR:P0A7D1"/>
<dbReference type="Proteomes" id="UP000000625">
    <property type="component" value="Chromosome"/>
</dbReference>
<dbReference type="GO" id="GO:0005737">
    <property type="term" value="C:cytoplasm"/>
    <property type="evidence" value="ECO:0007669"/>
    <property type="project" value="UniProtKB-SubCell"/>
</dbReference>
<dbReference type="GO" id="GO:0004045">
    <property type="term" value="F:peptidyl-tRNA hydrolase activity"/>
    <property type="evidence" value="ECO:0000314"/>
    <property type="project" value="EcoCyc"/>
</dbReference>
<dbReference type="GO" id="GO:0000049">
    <property type="term" value="F:tRNA binding"/>
    <property type="evidence" value="ECO:0007669"/>
    <property type="project" value="UniProtKB-UniRule"/>
</dbReference>
<dbReference type="GO" id="GO:0006515">
    <property type="term" value="P:protein quality control for misfolded or incompletely synthesized proteins"/>
    <property type="evidence" value="ECO:0000314"/>
    <property type="project" value="EcoCyc"/>
</dbReference>
<dbReference type="GO" id="GO:0072344">
    <property type="term" value="P:rescue of stalled ribosome"/>
    <property type="evidence" value="ECO:0007669"/>
    <property type="project" value="UniProtKB-UniRule"/>
</dbReference>
<dbReference type="CDD" id="cd00462">
    <property type="entry name" value="PTH"/>
    <property type="match status" value="1"/>
</dbReference>
<dbReference type="FunFam" id="3.40.50.1470:FF:000001">
    <property type="entry name" value="Peptidyl-tRNA hydrolase"/>
    <property type="match status" value="1"/>
</dbReference>
<dbReference type="Gene3D" id="3.40.50.1470">
    <property type="entry name" value="Peptidyl-tRNA hydrolase"/>
    <property type="match status" value="1"/>
</dbReference>
<dbReference type="HAMAP" id="MF_00083">
    <property type="entry name" value="Pept_tRNA_hydro_bact"/>
    <property type="match status" value="1"/>
</dbReference>
<dbReference type="InterPro" id="IPR001328">
    <property type="entry name" value="Pept_tRNA_hydro"/>
</dbReference>
<dbReference type="InterPro" id="IPR018171">
    <property type="entry name" value="Pept_tRNA_hydro_CS"/>
</dbReference>
<dbReference type="InterPro" id="IPR036416">
    <property type="entry name" value="Pept_tRNA_hydro_sf"/>
</dbReference>
<dbReference type="NCBIfam" id="TIGR00447">
    <property type="entry name" value="pth"/>
    <property type="match status" value="1"/>
</dbReference>
<dbReference type="PANTHER" id="PTHR17224">
    <property type="entry name" value="PEPTIDYL-TRNA HYDROLASE"/>
    <property type="match status" value="1"/>
</dbReference>
<dbReference type="PANTHER" id="PTHR17224:SF1">
    <property type="entry name" value="PEPTIDYL-TRNA HYDROLASE"/>
    <property type="match status" value="1"/>
</dbReference>
<dbReference type="Pfam" id="PF01195">
    <property type="entry name" value="Pept_tRNA_hydro"/>
    <property type="match status" value="1"/>
</dbReference>
<dbReference type="SUPFAM" id="SSF53178">
    <property type="entry name" value="Peptidyl-tRNA hydrolase-like"/>
    <property type="match status" value="1"/>
</dbReference>
<dbReference type="PROSITE" id="PS01195">
    <property type="entry name" value="PEPT_TRNA_HYDROL_1"/>
    <property type="match status" value="1"/>
</dbReference>
<dbReference type="PROSITE" id="PS01196">
    <property type="entry name" value="PEPT_TRNA_HYDROL_2"/>
    <property type="match status" value="1"/>
</dbReference>
<gene>
    <name evidence="1 9" type="primary">pth</name>
    <name evidence="9" type="synonym">rap</name>
    <name type="ordered locus">b1204</name>
    <name type="ordered locus">JW1195</name>
</gene>
<keyword id="KW-0002">3D-structure</keyword>
<keyword id="KW-0963">Cytoplasm</keyword>
<keyword id="KW-0903">Direct protein sequencing</keyword>
<keyword id="KW-0378">Hydrolase</keyword>
<keyword id="KW-1185">Reference proteome</keyword>
<keyword id="KW-0694">RNA-binding</keyword>
<keyword id="KW-0820">tRNA-binding</keyword>
<sequence length="194" mass="21082">MTIKLIVGLANPGAEYAATRHNAGAWFVDLLAERLRAPLREEAKFFGYTSRVTLGGEDVRLLVPTTFMNLSGKAVAAMASFFRINPDEILVAHDELDLPPGVAKFKLGGGHGGHNGLKDIISKLGNNPNFHRLRIGIGHPGDKNKVVGFVLGKPPVSEQKLIDEAIDEAARCTEMWFTDGLTKATNRLHAFKAQ</sequence>
<organism>
    <name type="scientific">Escherichia coli (strain K12)</name>
    <dbReference type="NCBI Taxonomy" id="83333"/>
    <lineage>
        <taxon>Bacteria</taxon>
        <taxon>Pseudomonadati</taxon>
        <taxon>Pseudomonadota</taxon>
        <taxon>Gammaproteobacteria</taxon>
        <taxon>Enterobacterales</taxon>
        <taxon>Enterobacteriaceae</taxon>
        <taxon>Escherichia</taxon>
    </lineage>
</organism>
<accession>P0A7D1</accession>
<accession>P23932</accession>
<reference key="1">
    <citation type="journal article" date="1991" name="EMBO J.">
        <title>Peptidyl-tRNA hydrolase is involved in lambda inhibition of host protein synthesis.</title>
        <authorList>
            <person name="Garcia-Villegas M.R."/>
            <person name="de la Vega F.M."/>
            <person name="Galindo J.M."/>
            <person name="Segura M."/>
            <person name="Buckingham R.H."/>
            <person name="Guarneros G."/>
        </authorList>
    </citation>
    <scope>NUCLEOTIDE SEQUENCE [GENOMIC DNA]</scope>
    <scope>PROTEIN SEQUENCE OF 2-17</scope>
    <scope>FUNCTION</scope>
    <scope>CATALYTIC ACTIVITY</scope>
    <scope>MUTAGENESIS OF GLY-101 AND ARG-134</scope>
    <source>
        <strain>K12 / C600 / CR34 / ATCC 23724 / DSM 3925 / LMG 3041 / NCIB 10222</strain>
    </source>
</reference>
<reference key="2">
    <citation type="journal article" date="1996" name="DNA Res.">
        <title>A 718-kb DNA sequence of the Escherichia coli K-12 genome corresponding to the 12.7-28.0 min region on the linkage map.</title>
        <authorList>
            <person name="Oshima T."/>
            <person name="Aiba H."/>
            <person name="Baba T."/>
            <person name="Fujita K."/>
            <person name="Hayashi K."/>
            <person name="Honjo A."/>
            <person name="Ikemoto K."/>
            <person name="Inada T."/>
            <person name="Itoh T."/>
            <person name="Kajihara M."/>
            <person name="Kanai K."/>
            <person name="Kashimoto K."/>
            <person name="Kimura S."/>
            <person name="Kitagawa M."/>
            <person name="Makino K."/>
            <person name="Masuda S."/>
            <person name="Miki T."/>
            <person name="Mizobuchi K."/>
            <person name="Mori H."/>
            <person name="Motomura K."/>
            <person name="Nakamura Y."/>
            <person name="Nashimoto H."/>
            <person name="Nishio Y."/>
            <person name="Saito N."/>
            <person name="Sampei G."/>
            <person name="Seki Y."/>
            <person name="Tagami H."/>
            <person name="Takemoto K."/>
            <person name="Wada C."/>
            <person name="Yamamoto Y."/>
            <person name="Yano M."/>
            <person name="Horiuchi T."/>
        </authorList>
    </citation>
    <scope>NUCLEOTIDE SEQUENCE [LARGE SCALE GENOMIC DNA]</scope>
    <source>
        <strain>K12 / W3110 / ATCC 27325 / DSM 5911</strain>
    </source>
</reference>
<reference key="3">
    <citation type="journal article" date="1997" name="Science">
        <title>The complete genome sequence of Escherichia coli K-12.</title>
        <authorList>
            <person name="Blattner F.R."/>
            <person name="Plunkett G. III"/>
            <person name="Bloch C.A."/>
            <person name="Perna N.T."/>
            <person name="Burland V."/>
            <person name="Riley M."/>
            <person name="Collado-Vides J."/>
            <person name="Glasner J.D."/>
            <person name="Rode C.K."/>
            <person name="Mayhew G.F."/>
            <person name="Gregor J."/>
            <person name="Davis N.W."/>
            <person name="Kirkpatrick H.A."/>
            <person name="Goeden M.A."/>
            <person name="Rose D.J."/>
            <person name="Mau B."/>
            <person name="Shao Y."/>
        </authorList>
    </citation>
    <scope>NUCLEOTIDE SEQUENCE [LARGE SCALE GENOMIC DNA]</scope>
    <source>
        <strain>K12 / MG1655 / ATCC 47076</strain>
    </source>
</reference>
<reference key="4">
    <citation type="journal article" date="2006" name="Mol. Syst. Biol.">
        <title>Highly accurate genome sequences of Escherichia coli K-12 strains MG1655 and W3110.</title>
        <authorList>
            <person name="Hayashi K."/>
            <person name="Morooka N."/>
            <person name="Yamamoto Y."/>
            <person name="Fujita K."/>
            <person name="Isono K."/>
            <person name="Choi S."/>
            <person name="Ohtsubo E."/>
            <person name="Baba T."/>
            <person name="Wanner B.L."/>
            <person name="Mori H."/>
            <person name="Horiuchi T."/>
        </authorList>
    </citation>
    <scope>NUCLEOTIDE SEQUENCE [LARGE SCALE GENOMIC DNA]</scope>
    <source>
        <strain>K12 / W3110 / ATCC 27325 / DSM 5911</strain>
    </source>
</reference>
<reference key="5">
    <citation type="journal article" date="1967" name="Proc. Natl. Acad. Sci. U.S.A.">
        <title>Enzymatic hydrolysis of N-substituted aminoacyl-tRNA.</title>
        <authorList>
            <person name="Cuzin F."/>
            <person name="Kretchmer N."/>
            <person name="Greenberg R.E."/>
            <person name="Hurwitz R."/>
            <person name="Chapeville F."/>
        </authorList>
    </citation>
    <scope>FUNCTION</scope>
    <scope>SUBSTRATE SPECIFICITY</scope>
    <scope>CATALYTIC ACTIVITY</scope>
    <scope>BIOPHYSICOCHEMICAL PROPERTIES</scope>
    <source>
        <strain>MRE-600</strain>
    </source>
</reference>
<reference key="6">
    <citation type="journal article" date="1969" name="Biochim. Biophys. Acta">
        <title>Peptidyl-tRNA. VII. Substrate specificity of peptidyl-tRNA hydrolase.</title>
        <authorList>
            <person name="De Groot N."/>
            <person name="Groner Y."/>
            <person name="Lapidot Y."/>
        </authorList>
    </citation>
    <scope>FUNCTION</scope>
    <scope>SUBSTRATE SPECIFICITY</scope>
    <scope>CATALYTIC ACTIVITY</scope>
    <scope>ACTIVITY REGULATION</scope>
    <scope>BIOPHYSICOCHEMICAL PROPERTIES</scope>
    <scope>SUBCELLULAR LOCATION</scope>
    <source>
        <strain>W</strain>
    </source>
</reference>
<reference key="7">
    <citation type="journal article" date="2011" name="J. Mol. Biol.">
        <title>NMR-based substrate analog docking to Escherichia coli peptidyl-tRNA hydrolase.</title>
        <authorList>
            <person name="Giorgi L."/>
            <person name="Plateau P."/>
            <person name="O'Mahony G."/>
            <person name="Aubard C."/>
            <person name="Fromant M."/>
            <person name="Thureau A."/>
            <person name="Groetli M."/>
            <person name="Blanquet S."/>
            <person name="Bontems F."/>
        </authorList>
    </citation>
    <scope>ACTIVE SITE</scope>
    <scope>TRNA SUBSTRATE-BINDING</scope>
    <scope>MUTAGENESIS OF ASN-11 AND HIS-21</scope>
</reference>
<reference key="8">
    <citation type="journal article" date="2024" name="Mol. Cell">
        <title>Peptidyl-tRNA hydrolase is the nascent chain release factor in bacterial ribosome-associated quality control.</title>
        <authorList>
            <person name="Svetlov M.S."/>
            <person name="Dunand C.F."/>
            <person name="Nakamoto J.A."/>
            <person name="Atkinson G.C."/>
            <person name="Safdari H.A."/>
            <person name="Wilson D.N."/>
            <person name="Vazquez-Laslop N."/>
            <person name="Mankin A.S."/>
        </authorList>
    </citation>
    <scope>FUNCTION</scope>
    <scope>DISRUPTION PHENOTYPE</scope>
    <source>
        <strain>K12 / C600 / CR34 / ATCC 23724 / DSM 3925 / LMG 3041 / NCIB 10222</strain>
    </source>
</reference>
<reference key="9">
    <citation type="journal article" date="1997" name="Proteins">
        <title>Crystallization and preliminary X-ray analysis of Escherichia coli peptidyl-tRNA hydrolase.</title>
        <authorList>
            <person name="Schmitt E."/>
            <person name="Fromant M."/>
            <person name="Plateau P."/>
            <person name="Mechulam Y."/>
            <person name="Blanquet S."/>
        </authorList>
    </citation>
    <scope>CRYSTALLIZATION</scope>
</reference>
<reference evidence="15" key="10">
    <citation type="journal article" date="1997" name="EMBO J.">
        <title>Crystal structure at 1.2-A resolution and active site mapping of Escherichia coli peptidyl-tRNA hydrolase.</title>
        <authorList>
            <person name="Schmitt E."/>
            <person name="Mechulam Y."/>
            <person name="Fromant M."/>
            <person name="Plateau P."/>
            <person name="Blanquet S."/>
        </authorList>
    </citation>
    <scope>X-RAY CRYSTALLOGRAPHY (1.2 ANGSTROMS)</scope>
    <scope>FUNCTION</scope>
    <scope>CATALYTIC ACTIVITY</scope>
    <scope>PROBABLE ACTIVE SITES</scope>
    <scope>BIOPHYSICOCHEMICAL PROPERTIES</scope>
    <scope>SUBUNIT</scope>
    <scope>SUBCELLULAR LOCATION</scope>
    <scope>DISRUPTION PHENOTYPE</scope>
    <scope>MUTAGENESIS OF ASN-11; HIS-21; PHE-67; MET-68; ASP-94; HIS-114 AND LYS-143</scope>
</reference>
<reference evidence="16" key="11">
    <citation type="journal article" date="2012" name="Nucleic Acids Res.">
        <title>Structural basis for the substrate recognition and catalysis of peptidyl-tRNA hydrolase.</title>
        <authorList>
            <person name="Ito K."/>
            <person name="Murakami R."/>
            <person name="Mochizuki M."/>
            <person name="Qi H."/>
            <person name="Shimizu Y."/>
            <person name="Miura K."/>
            <person name="Ueda T."/>
            <person name="Uchiumi T."/>
        </authorList>
    </citation>
    <scope>X-RAY CRYSTALLOGRAPHY (2.40 ANGSTROMS) IN COMPLEX WITH UNCHARGED TRNA CCA-ACCEPTOR-T-PSI-C DOMAIN</scope>
    <scope>FUNCTION</scope>
    <scope>CATALYTIC ACTIVITY</scope>
    <scope>PROBABLE ACTIVE SITES</scope>
    <scope>SUBUNIT</scope>
    <scope>DOMAIN</scope>
    <scope>TRNA-BINDING</scope>
    <scope>MUTAGENESIS OF 186-ASN--HIS-189; ASN-186 AND HIS-189</scope>
</reference>
<name>PTH_ECOLI</name>
<feature type="chain" id="PRO_0000187733" description="Peptidyl-tRNA hydrolase">
    <location>
        <begin position="1"/>
        <end position="194"/>
    </location>
</feature>
<feature type="initiator methionine" description="Removed; alternate" evidence="2">
    <location>
        <position position="1"/>
    </location>
</feature>
<feature type="chain" id="PRO_0000461646" description="Peptidyl-tRNA hydrolase, N-terminally processed">
    <location>
        <begin position="2"/>
        <end position="194"/>
    </location>
</feature>
<feature type="active site" description="Proton acceptor" evidence="1 12 14">
    <location>
        <position position="21"/>
    </location>
</feature>
<feature type="binding site" evidence="1 11">
    <location>
        <position position="16"/>
    </location>
    <ligand>
        <name>tRNA</name>
        <dbReference type="ChEBI" id="CHEBI:17843"/>
    </ligand>
</feature>
<feature type="binding site" evidence="1 11">
    <location>
        <position position="67"/>
    </location>
    <ligand>
        <name>tRNA</name>
        <dbReference type="ChEBI" id="CHEBI:17843"/>
    </ligand>
</feature>
<feature type="binding site" evidence="1 4 11">
    <location>
        <position position="69"/>
    </location>
    <ligand>
        <name>tRNA</name>
        <dbReference type="ChEBI" id="CHEBI:17843"/>
    </ligand>
</feature>
<feature type="binding site" evidence="1 4 11">
    <location>
        <position position="115"/>
    </location>
    <ligand>
        <name>tRNA</name>
        <dbReference type="ChEBI" id="CHEBI:17843"/>
    </ligand>
</feature>
<feature type="site" description="Discriminates between blocked and unblocked aminoacyl-tRNA" evidence="1 3">
    <location>
        <position position="11"/>
    </location>
</feature>
<feature type="site" description="Stabilizes the basic form of H active site to accept a proton" evidence="1 11 12 14">
    <location>
        <position position="94"/>
    </location>
</feature>
<feature type="mutagenesis site" description="Complements a deletion, kcat/Km for charged tRNA(Lys) is 0.8% of wild-type. Diacetyl-Lys-tRNA(Lys) hydrolysis reduced 275-fold, no change in hydrolysis rate of un-acetylated Lys-tRNA(Lys)." evidence="3 8">
    <original>N</original>
    <variation>A</variation>
    <location>
        <position position="11"/>
    </location>
</feature>
<feature type="mutagenesis site" description="Diacetyl-Lys-tRNA(Lys) hydrolysis reduced 780-fold, no change in hydrolysis rate of un-acetylated Lys-tRNA(Lys)." evidence="3">
    <original>N</original>
    <variation>D</variation>
    <location>
        <position position="11"/>
    </location>
</feature>
<feature type="mutagenesis site" description="Does not restore growth to a deletion mutant, kcat/Km for charged tRNA(Lys) is &lt;0.8% of wild-type. Loss of catalytic activity." evidence="3 8">
    <original>H</original>
    <variation>A</variation>
    <location>
        <position position="21"/>
    </location>
</feature>
<feature type="mutagenesis site" description="Complements a deletion, kcat/Km for charged tRNA(Lys) is 33% of wild-type." evidence="8">
    <original>F</original>
    <variation>A</variation>
    <location>
        <position position="67"/>
    </location>
</feature>
<feature type="mutagenesis site" description="Complements a deletion, kcat/Km for charged tRNA(Lys) is 6.7% of wild-type." evidence="8">
    <original>M</original>
    <variation>A</variation>
    <location>
        <position position="68"/>
    </location>
</feature>
<feature type="mutagenesis site" description="Complements a deletion, kcat/Km for charged tRNA(Lys) is 0.8% of wild-type." evidence="8">
    <original>D</original>
    <variation>A</variation>
    <location>
        <position position="94"/>
    </location>
</feature>
<feature type="mutagenesis site" description="In pth(ts); mutants synthesize thermosensitive PTH with 9.1% activity at 32 degrees Celsius, and die at 42 degrees Celsius from a defect in protein synthesis." evidence="2">
    <original>G</original>
    <variation>D</variation>
    <location>
        <position position="101"/>
    </location>
</feature>
<feature type="mutagenesis site" description="Complements a deletion, kcat/Km for charged tRNA(Lys) is 23% of wild-type." evidence="8">
    <original>H</original>
    <variation>A</variation>
    <location>
        <position position="114"/>
    </location>
</feature>
<feature type="mutagenesis site" description="In rap; mutants have 9.6% PTH activity at 32 degrees Celsius, do not support vegetative growth of bacteriophage lambda and die upon transcription of lambda DNA bar sites." evidence="2">
    <original>R</original>
    <variation>H</variation>
    <location>
        <position position="134"/>
    </location>
</feature>
<feature type="mutagenesis site" description="Complements a deletion, kcat/Km for charged tRNA(Lys) is 10% of wild-type." evidence="8">
    <original>K</original>
    <variation>A</variation>
    <location>
        <position position="143"/>
    </location>
</feature>
<feature type="mutagenesis site" description="Km for charged tRNA(Ala) increases 5.7-fold." evidence="4">
    <original>NRLH</original>
    <variation>ARLA</variation>
    <location>
        <begin position="186"/>
        <end position="189"/>
    </location>
</feature>
<feature type="mutagenesis site" description="Km for charged tRNA(Ala) increases 2.8-fold." evidence="4">
    <original>N</original>
    <variation>A</variation>
    <location>
        <position position="186"/>
    </location>
</feature>
<feature type="mutagenesis site" description="Km for charged tRNA(Ala) increases 2.6-fold." evidence="4">
    <original>H</original>
    <variation>A</variation>
    <location>
        <position position="189"/>
    </location>
</feature>
<feature type="strand" evidence="17">
    <location>
        <begin position="5"/>
        <end position="8"/>
    </location>
</feature>
<feature type="turn" evidence="17">
    <location>
        <begin position="14"/>
        <end position="18"/>
    </location>
</feature>
<feature type="helix" evidence="17">
    <location>
        <begin position="20"/>
        <end position="22"/>
    </location>
</feature>
<feature type="helix" evidence="17">
    <location>
        <begin position="23"/>
        <end position="35"/>
    </location>
</feature>
<feature type="strand" evidence="17">
    <location>
        <begin position="40"/>
        <end position="42"/>
    </location>
</feature>
<feature type="helix" evidence="17">
    <location>
        <begin position="43"/>
        <end position="45"/>
    </location>
</feature>
<feature type="strand" evidence="17">
    <location>
        <begin position="47"/>
        <end position="54"/>
    </location>
</feature>
<feature type="strand" evidence="17">
    <location>
        <begin position="57"/>
        <end position="64"/>
    </location>
</feature>
<feature type="helix" evidence="17">
    <location>
        <begin position="68"/>
        <end position="71"/>
    </location>
</feature>
<feature type="helix" evidence="17">
    <location>
        <begin position="72"/>
        <end position="82"/>
    </location>
</feature>
<feature type="helix" evidence="17">
    <location>
        <begin position="86"/>
        <end position="88"/>
    </location>
</feature>
<feature type="strand" evidence="17">
    <location>
        <begin position="89"/>
        <end position="95"/>
    </location>
</feature>
<feature type="strand" evidence="17">
    <location>
        <begin position="103"/>
        <end position="108"/>
    </location>
</feature>
<feature type="helix" evidence="17">
    <location>
        <begin position="115"/>
        <end position="123"/>
    </location>
</feature>
<feature type="strand" evidence="17">
    <location>
        <begin position="130"/>
        <end position="136"/>
    </location>
</feature>
<feature type="helix" evidence="17">
    <location>
        <begin position="143"/>
        <end position="150"/>
    </location>
</feature>
<feature type="helix" evidence="17">
    <location>
        <begin position="156"/>
        <end position="179"/>
    </location>
</feature>
<feature type="helix" evidence="17">
    <location>
        <begin position="181"/>
        <end position="190"/>
    </location>
</feature>
<feature type="turn" evidence="17">
    <location>
        <begin position="191"/>
        <end position="193"/>
    </location>
</feature>
<proteinExistence type="evidence at protein level"/>
<evidence type="ECO:0000255" key="1">
    <source>
        <dbReference type="HAMAP-Rule" id="MF_00083"/>
    </source>
</evidence>
<evidence type="ECO:0000269" key="2">
    <source>
    </source>
</evidence>
<evidence type="ECO:0000269" key="3">
    <source>
    </source>
</evidence>
<evidence type="ECO:0000269" key="4">
    <source>
    </source>
</evidence>
<evidence type="ECO:0000269" key="5">
    <source>
    </source>
</evidence>
<evidence type="ECO:0000269" key="6">
    <source>
    </source>
</evidence>
<evidence type="ECO:0000269" key="7">
    <source>
    </source>
</evidence>
<evidence type="ECO:0000269" key="8">
    <source>
    </source>
</evidence>
<evidence type="ECO:0000303" key="9">
    <source>
    </source>
</evidence>
<evidence type="ECO:0000303" key="10">
    <source>
    </source>
</evidence>
<evidence type="ECO:0000305" key="11">
    <source>
    </source>
</evidence>
<evidence type="ECO:0000305" key="12">
    <source>
    </source>
</evidence>
<evidence type="ECO:0000305" key="13">
    <source>
    </source>
</evidence>
<evidence type="ECO:0000305" key="14">
    <source>
    </source>
</evidence>
<evidence type="ECO:0007744" key="15">
    <source>
        <dbReference type="PDB" id="2PTH"/>
    </source>
</evidence>
<evidence type="ECO:0007744" key="16">
    <source>
        <dbReference type="PDB" id="3VJR"/>
    </source>
</evidence>
<evidence type="ECO:0007829" key="17">
    <source>
        <dbReference type="PDB" id="2PTH"/>
    </source>
</evidence>
<protein>
    <recommendedName>
        <fullName evidence="1 9">Peptidyl-tRNA hydrolase</fullName>
        <shortName evidence="1 10">Pth</shortName>
        <ecNumber evidence="1 2 6">3.1.1.29</ecNumber>
    </recommendedName>
    <component>
        <recommendedName>
            <fullName>Peptidyl-tRNA hydrolase, N-terminally processed</fullName>
        </recommendedName>
    </component>
</protein>